<protein>
    <recommendedName>
        <fullName evidence="1">UPF0250 protein PSPTO_4820</fullName>
    </recommendedName>
</protein>
<accession>Q87VW5</accession>
<gene>
    <name type="ordered locus">PSPTO_4820</name>
</gene>
<proteinExistence type="inferred from homology"/>
<keyword id="KW-1185">Reference proteome</keyword>
<sequence length="91" mass="10019">MTDTDIKSHKIEFPCVDYPIKVIGDTSAGFTAAVMEVLEKHAQVDAKTLAERQSSNGKYTTVQLHIIATSEDQLRDINSALRATGFVHMVL</sequence>
<evidence type="ECO:0000255" key="1">
    <source>
        <dbReference type="HAMAP-Rule" id="MF_00659"/>
    </source>
</evidence>
<organism>
    <name type="scientific">Pseudomonas syringae pv. tomato (strain ATCC BAA-871 / DC3000)</name>
    <dbReference type="NCBI Taxonomy" id="223283"/>
    <lineage>
        <taxon>Bacteria</taxon>
        <taxon>Pseudomonadati</taxon>
        <taxon>Pseudomonadota</taxon>
        <taxon>Gammaproteobacteria</taxon>
        <taxon>Pseudomonadales</taxon>
        <taxon>Pseudomonadaceae</taxon>
        <taxon>Pseudomonas</taxon>
    </lineage>
</organism>
<name>Y4820_PSESM</name>
<comment type="similarity">
    <text evidence="1">Belongs to the UPF0250 family.</text>
</comment>
<reference key="1">
    <citation type="journal article" date="2003" name="Proc. Natl. Acad. Sci. U.S.A.">
        <title>The complete genome sequence of the Arabidopsis and tomato pathogen Pseudomonas syringae pv. tomato DC3000.</title>
        <authorList>
            <person name="Buell C.R."/>
            <person name="Joardar V."/>
            <person name="Lindeberg M."/>
            <person name="Selengut J."/>
            <person name="Paulsen I.T."/>
            <person name="Gwinn M.L."/>
            <person name="Dodson R.J."/>
            <person name="DeBoy R.T."/>
            <person name="Durkin A.S."/>
            <person name="Kolonay J.F."/>
            <person name="Madupu R."/>
            <person name="Daugherty S.C."/>
            <person name="Brinkac L.M."/>
            <person name="Beanan M.J."/>
            <person name="Haft D.H."/>
            <person name="Nelson W.C."/>
            <person name="Davidsen T.M."/>
            <person name="Zafar N."/>
            <person name="Zhou L."/>
            <person name="Liu J."/>
            <person name="Yuan Q."/>
            <person name="Khouri H.M."/>
            <person name="Fedorova N.B."/>
            <person name="Tran B."/>
            <person name="Russell D."/>
            <person name="Berry K.J."/>
            <person name="Utterback T.R."/>
            <person name="Van Aken S.E."/>
            <person name="Feldblyum T.V."/>
            <person name="D'Ascenzo M."/>
            <person name="Deng W.-L."/>
            <person name="Ramos A.R."/>
            <person name="Alfano J.R."/>
            <person name="Cartinhour S."/>
            <person name="Chatterjee A.K."/>
            <person name="Delaney T.P."/>
            <person name="Lazarowitz S.G."/>
            <person name="Martin G.B."/>
            <person name="Schneider D.J."/>
            <person name="Tang X."/>
            <person name="Bender C.L."/>
            <person name="White O."/>
            <person name="Fraser C.M."/>
            <person name="Collmer A."/>
        </authorList>
    </citation>
    <scope>NUCLEOTIDE SEQUENCE [LARGE SCALE GENOMIC DNA]</scope>
    <source>
        <strain>ATCC BAA-871 / DC3000</strain>
    </source>
</reference>
<feature type="chain" id="PRO_0000209308" description="UPF0250 protein PSPTO_4820">
    <location>
        <begin position="1"/>
        <end position="91"/>
    </location>
</feature>
<dbReference type="EMBL" id="AE016853">
    <property type="protein sequence ID" value="AAO58249.1"/>
    <property type="molecule type" value="Genomic_DNA"/>
</dbReference>
<dbReference type="RefSeq" id="NP_794554.1">
    <property type="nucleotide sequence ID" value="NC_004578.1"/>
</dbReference>
<dbReference type="RefSeq" id="WP_005763243.1">
    <property type="nucleotide sequence ID" value="NC_004578.1"/>
</dbReference>
<dbReference type="SMR" id="Q87VW5"/>
<dbReference type="STRING" id="223283.PSPTO_4820"/>
<dbReference type="GeneID" id="1186503"/>
<dbReference type="KEGG" id="pst:PSPTO_4820"/>
<dbReference type="PATRIC" id="fig|223283.9.peg.4930"/>
<dbReference type="eggNOG" id="COG2921">
    <property type="taxonomic scope" value="Bacteria"/>
</dbReference>
<dbReference type="HOGENOM" id="CLU_161438_1_0_6"/>
<dbReference type="OrthoDB" id="9793424at2"/>
<dbReference type="PhylomeDB" id="Q87VW5"/>
<dbReference type="Proteomes" id="UP000002515">
    <property type="component" value="Chromosome"/>
</dbReference>
<dbReference type="GO" id="GO:0005829">
    <property type="term" value="C:cytosol"/>
    <property type="evidence" value="ECO:0007669"/>
    <property type="project" value="TreeGrafter"/>
</dbReference>
<dbReference type="Gene3D" id="3.30.70.260">
    <property type="match status" value="1"/>
</dbReference>
<dbReference type="HAMAP" id="MF_00659">
    <property type="entry name" value="UPF0250"/>
    <property type="match status" value="1"/>
</dbReference>
<dbReference type="InterPro" id="IPR007454">
    <property type="entry name" value="UPF0250_YbeD-like"/>
</dbReference>
<dbReference type="InterPro" id="IPR027471">
    <property type="entry name" value="YbeD-like_sf"/>
</dbReference>
<dbReference type="NCBIfam" id="NF001486">
    <property type="entry name" value="PRK00341.1"/>
    <property type="match status" value="1"/>
</dbReference>
<dbReference type="PANTHER" id="PTHR38036">
    <property type="entry name" value="UPF0250 PROTEIN YBED"/>
    <property type="match status" value="1"/>
</dbReference>
<dbReference type="PANTHER" id="PTHR38036:SF1">
    <property type="entry name" value="UPF0250 PROTEIN YBED"/>
    <property type="match status" value="1"/>
</dbReference>
<dbReference type="Pfam" id="PF04359">
    <property type="entry name" value="DUF493"/>
    <property type="match status" value="1"/>
</dbReference>
<dbReference type="SUPFAM" id="SSF117991">
    <property type="entry name" value="YbeD/HP0495-like"/>
    <property type="match status" value="1"/>
</dbReference>